<proteinExistence type="inferred from homology"/>
<protein>
    <recommendedName>
        <fullName evidence="1">Light-independent protochlorophyllide reductase subunit N</fullName>
        <shortName evidence="1">DPOR subunit N</shortName>
        <shortName evidence="1">LI-POR subunit N</shortName>
        <ecNumber evidence="1">1.3.7.7</ecNumber>
    </recommendedName>
</protein>
<sequence length="572" mass="64369">MRNTVLNTLNAFPTQLGSNKSTLSSKIFHSYLGVLRPPTPLNTSMEVLGEGAHQNREAKRSSLRFEFCSALKECQKGKVPFGSSLRLEAAENLTFECETGNYHTFCPISCVRWLYQQIADSFFLVIGTKTCGYFLQNAMGVMIFAEPRYAMAELEEGDIAAQLNDYKELKRLCLQIKHDRNPSVIVWIGTCTTEIIKMDLENLAKLIEAELKVPIVVARANGLDYAFTQGEDTVLASLVNRCPSSHESSLDSMKLPSGGREKQINDVNTSKPEGYLSEVISLTSNGDDINKKSCTKPVPKKSLVLFGSVPNSVQTQLTLELAKQGINVDGWLPSRYSELPVLNKDVYVCGINPFLSRTATSLMRRRKCHLISAPFPIGPDGTRRWIEKICTVLNTDKSSTSLEEVQKNLQQREEKVWKSLQSYLDLVKKKSVFFMGDNLLEISLARFFIRCGMIVYEIGIPYMDRRYQAAELALLEQTCLEMNVPLPRIVEKPDNYNQIQRIRELQPDIVVTGLAHSNPLEARGVTTKWSTEFTFAQIHGFANSRDVLELITRPVRRNQNLDALGFTSLVKN</sequence>
<reference key="1">
    <citation type="journal article" date="2006" name="BMC Biol.">
        <title>The complete chloroplast DNA sequence of the green alga Oltmannsiellopsis viridis reveals a distinctive quadripartite architecture in the chloroplast genome of early diverging ulvophytes.</title>
        <authorList>
            <person name="Pombert J.-F."/>
            <person name="Lemieux C."/>
            <person name="Turmel M."/>
        </authorList>
    </citation>
    <scope>NUCLEOTIDE SEQUENCE [LARGE SCALE GENOMIC DNA]</scope>
</reference>
<feature type="chain" id="PRO_0000324038" description="Light-independent protochlorophyllide reductase subunit N">
    <location>
        <begin position="1"/>
        <end position="572"/>
    </location>
</feature>
<feature type="region of interest" description="Disordered" evidence="2">
    <location>
        <begin position="249"/>
        <end position="268"/>
    </location>
</feature>
<feature type="binding site" evidence="1">
    <location>
        <position position="106"/>
    </location>
    <ligand>
        <name>[4Fe-4S] cluster</name>
        <dbReference type="ChEBI" id="CHEBI:49883"/>
        <note>ligand shared with heterodimeric partner</note>
    </ligand>
</feature>
<feature type="binding site" evidence="1">
    <location>
        <position position="131"/>
    </location>
    <ligand>
        <name>[4Fe-4S] cluster</name>
        <dbReference type="ChEBI" id="CHEBI:49883"/>
        <note>ligand shared with heterodimeric partner</note>
    </ligand>
</feature>
<feature type="binding site" evidence="1">
    <location>
        <position position="191"/>
    </location>
    <ligand>
        <name>[4Fe-4S] cluster</name>
        <dbReference type="ChEBI" id="CHEBI:49883"/>
        <note>ligand shared with heterodimeric partner</note>
    </ligand>
</feature>
<name>CHLN_OLTVI</name>
<comment type="function">
    <text evidence="1">Component of the dark-operative protochlorophyllide reductase (DPOR) that uses Mg-ATP and reduced ferredoxin to reduce ring D of protochlorophyllide (Pchlide) to form chlorophyllide a (Chlide). This reaction is light-independent. The NB-protein (ChlN-ChlB) is the catalytic component of the complex.</text>
</comment>
<comment type="catalytic activity">
    <reaction evidence="1">
        <text>chlorophyllide a + oxidized 2[4Fe-4S]-[ferredoxin] + 2 ADP + 2 phosphate = protochlorophyllide a + reduced 2[4Fe-4S]-[ferredoxin] + 2 ATP + 2 H2O</text>
        <dbReference type="Rhea" id="RHEA:28202"/>
        <dbReference type="Rhea" id="RHEA-COMP:10002"/>
        <dbReference type="Rhea" id="RHEA-COMP:10004"/>
        <dbReference type="ChEBI" id="CHEBI:15377"/>
        <dbReference type="ChEBI" id="CHEBI:30616"/>
        <dbReference type="ChEBI" id="CHEBI:33722"/>
        <dbReference type="ChEBI" id="CHEBI:33723"/>
        <dbReference type="ChEBI" id="CHEBI:43474"/>
        <dbReference type="ChEBI" id="CHEBI:83348"/>
        <dbReference type="ChEBI" id="CHEBI:83350"/>
        <dbReference type="ChEBI" id="CHEBI:456216"/>
        <dbReference type="EC" id="1.3.7.7"/>
    </reaction>
</comment>
<comment type="cofactor">
    <cofactor evidence="1">
        <name>[4Fe-4S] cluster</name>
        <dbReference type="ChEBI" id="CHEBI:49883"/>
    </cofactor>
    <text evidence="1">Binds 1 [4Fe-4S] cluster per heterodimer. The cluster is bound at the heterodimer interface by residues from both subunits.</text>
</comment>
<comment type="pathway">
    <text evidence="1">Porphyrin-containing compound metabolism; chlorophyll biosynthesis (light-independent).</text>
</comment>
<comment type="subunit">
    <text evidence="1">Protochlorophyllide reductase is composed of three subunits; ChlL, ChlN and ChlB. Forms a heterotetramer of two ChlB and two ChlN subunits.</text>
</comment>
<comment type="subcellular location">
    <subcellularLocation>
        <location>Plastid</location>
        <location>Chloroplast</location>
    </subcellularLocation>
</comment>
<comment type="similarity">
    <text evidence="1">Belongs to the BchN/ChlN family.</text>
</comment>
<evidence type="ECO:0000255" key="1">
    <source>
        <dbReference type="HAMAP-Rule" id="MF_00352"/>
    </source>
</evidence>
<evidence type="ECO:0000256" key="2">
    <source>
        <dbReference type="SAM" id="MobiDB-lite"/>
    </source>
</evidence>
<keyword id="KW-0004">4Fe-4S</keyword>
<keyword id="KW-0067">ATP-binding</keyword>
<keyword id="KW-0149">Chlorophyll biosynthesis</keyword>
<keyword id="KW-0150">Chloroplast</keyword>
<keyword id="KW-0408">Iron</keyword>
<keyword id="KW-0411">Iron-sulfur</keyword>
<keyword id="KW-0479">Metal-binding</keyword>
<keyword id="KW-0547">Nucleotide-binding</keyword>
<keyword id="KW-0560">Oxidoreductase</keyword>
<keyword id="KW-0602">Photosynthesis</keyword>
<keyword id="KW-0934">Plastid</keyword>
<geneLocation type="chloroplast"/>
<gene>
    <name evidence="1" type="primary">chlN</name>
</gene>
<accession>Q20EX8</accession>
<organism>
    <name type="scientific">Oltmannsiellopsis viridis</name>
    <name type="common">Marine flagellate</name>
    <name type="synonym">Oltmannsiella viridis</name>
    <dbReference type="NCBI Taxonomy" id="51324"/>
    <lineage>
        <taxon>Eukaryota</taxon>
        <taxon>Viridiplantae</taxon>
        <taxon>Chlorophyta</taxon>
        <taxon>Ulvophyceae</taxon>
        <taxon>Oltmannsiellopsidales</taxon>
        <taxon>Oltmannsiellopsidaceae</taxon>
        <taxon>Oltmannsiellopsis</taxon>
    </lineage>
</organism>
<dbReference type="EC" id="1.3.7.7" evidence="1"/>
<dbReference type="EMBL" id="DQ291132">
    <property type="protein sequence ID" value="ABB81935.1"/>
    <property type="molecule type" value="Genomic_DNA"/>
</dbReference>
<dbReference type="RefSeq" id="YP_635867.2">
    <property type="nucleotide sequence ID" value="NC_008099.1"/>
</dbReference>
<dbReference type="SMR" id="Q20EX8"/>
<dbReference type="GeneID" id="4100152"/>
<dbReference type="UniPathway" id="UPA00670"/>
<dbReference type="GO" id="GO:0009507">
    <property type="term" value="C:chloroplast"/>
    <property type="evidence" value="ECO:0007669"/>
    <property type="project" value="UniProtKB-SubCell"/>
</dbReference>
<dbReference type="GO" id="GO:0051539">
    <property type="term" value="F:4 iron, 4 sulfur cluster binding"/>
    <property type="evidence" value="ECO:0007669"/>
    <property type="project" value="UniProtKB-UniRule"/>
</dbReference>
<dbReference type="GO" id="GO:0005524">
    <property type="term" value="F:ATP binding"/>
    <property type="evidence" value="ECO:0007669"/>
    <property type="project" value="UniProtKB-UniRule"/>
</dbReference>
<dbReference type="GO" id="GO:0046872">
    <property type="term" value="F:metal ion binding"/>
    <property type="evidence" value="ECO:0007669"/>
    <property type="project" value="UniProtKB-KW"/>
</dbReference>
<dbReference type="GO" id="GO:0016730">
    <property type="term" value="F:oxidoreductase activity, acting on iron-sulfur proteins as donors"/>
    <property type="evidence" value="ECO:0007669"/>
    <property type="project" value="InterPro"/>
</dbReference>
<dbReference type="GO" id="GO:0016636">
    <property type="term" value="F:oxidoreductase activity, acting on the CH-CH group of donors, iron-sulfur protein as acceptor"/>
    <property type="evidence" value="ECO:0007669"/>
    <property type="project" value="UniProtKB-UniRule"/>
</dbReference>
<dbReference type="GO" id="GO:0036068">
    <property type="term" value="P:light-independent chlorophyll biosynthetic process"/>
    <property type="evidence" value="ECO:0007669"/>
    <property type="project" value="UniProtKB-UniRule"/>
</dbReference>
<dbReference type="GO" id="GO:0019685">
    <property type="term" value="P:photosynthesis, dark reaction"/>
    <property type="evidence" value="ECO:0007669"/>
    <property type="project" value="InterPro"/>
</dbReference>
<dbReference type="CDD" id="cd01979">
    <property type="entry name" value="Pchlide_reductase_N"/>
    <property type="match status" value="1"/>
</dbReference>
<dbReference type="Gene3D" id="3.40.50.1980">
    <property type="entry name" value="Nitrogenase molybdenum iron protein domain"/>
    <property type="match status" value="2"/>
</dbReference>
<dbReference type="HAMAP" id="MF_00352">
    <property type="entry name" value="ChlN_BchN"/>
    <property type="match status" value="1"/>
</dbReference>
<dbReference type="InterPro" id="IPR050293">
    <property type="entry name" value="LIPOR_BchN/ChlN"/>
</dbReference>
<dbReference type="InterPro" id="IPR000510">
    <property type="entry name" value="Nase/OxRdtase_comp1"/>
</dbReference>
<dbReference type="InterPro" id="IPR005970">
    <property type="entry name" value="Protochl_reductN"/>
</dbReference>
<dbReference type="NCBIfam" id="TIGR01279">
    <property type="entry name" value="DPOR_bchN"/>
    <property type="match status" value="1"/>
</dbReference>
<dbReference type="NCBIfam" id="NF002768">
    <property type="entry name" value="PRK02842.1"/>
    <property type="match status" value="1"/>
</dbReference>
<dbReference type="PANTHER" id="PTHR39429">
    <property type="entry name" value="LIGHT-INDEPENDENT PROTOCHLOROPHYLLIDE REDUCTASE SUBUNIT N"/>
    <property type="match status" value="1"/>
</dbReference>
<dbReference type="PANTHER" id="PTHR39429:SF3">
    <property type="entry name" value="LIGHT-INDEPENDENT PROTOCHLOROPHYLLIDE REDUCTASE SUBUNIT N"/>
    <property type="match status" value="1"/>
</dbReference>
<dbReference type="Pfam" id="PF00148">
    <property type="entry name" value="Oxidored_nitro"/>
    <property type="match status" value="1"/>
</dbReference>
<dbReference type="SUPFAM" id="SSF53807">
    <property type="entry name" value="Helical backbone' metal receptor"/>
    <property type="match status" value="1"/>
</dbReference>